<dbReference type="EC" id="4.2.1.82" evidence="2"/>
<dbReference type="EC" id="4.2.1.39" evidence="2"/>
<dbReference type="EMBL" id="AE005673">
    <property type="protein sequence ID" value="AAK22804.1"/>
    <property type="molecule type" value="Genomic_DNA"/>
</dbReference>
<dbReference type="PIR" id="H87350">
    <property type="entry name" value="H87350"/>
</dbReference>
<dbReference type="RefSeq" id="NP_419636.1">
    <property type="nucleotide sequence ID" value="NC_002696.2"/>
</dbReference>
<dbReference type="PDB" id="5OYN">
    <property type="method" value="X-ray"/>
    <property type="resolution" value="2.70 A"/>
    <property type="chains" value="A/B/C/D=6-595"/>
</dbReference>
<dbReference type="PDBsum" id="5OYN"/>
<dbReference type="SMR" id="Q9A9Z2"/>
<dbReference type="STRING" id="190650.CC_0819"/>
<dbReference type="EnsemblBacteria" id="AAK22804">
    <property type="protein sequence ID" value="AAK22804"/>
    <property type="gene ID" value="CC_0819"/>
</dbReference>
<dbReference type="KEGG" id="ccr:CC_0819"/>
<dbReference type="PATRIC" id="fig|190650.5.peg.832"/>
<dbReference type="eggNOG" id="COG0129">
    <property type="taxonomic scope" value="Bacteria"/>
</dbReference>
<dbReference type="HOGENOM" id="CLU_014271_3_1_5"/>
<dbReference type="BioCyc" id="CAULO:CC0819-MONOMER"/>
<dbReference type="BRENDA" id="4.2.1.82">
    <property type="organism ID" value="1218"/>
</dbReference>
<dbReference type="UniPathway" id="UPA00810"/>
<dbReference type="Proteomes" id="UP000001816">
    <property type="component" value="Chromosome"/>
</dbReference>
<dbReference type="GO" id="GO:0051537">
    <property type="term" value="F:2 iron, 2 sulfur cluster binding"/>
    <property type="evidence" value="ECO:0007669"/>
    <property type="project" value="UniProtKB-KW"/>
</dbReference>
<dbReference type="GO" id="GO:0047929">
    <property type="term" value="F:gluconate dehydratase activity"/>
    <property type="evidence" value="ECO:0007669"/>
    <property type="project" value="UniProtKB-EC"/>
</dbReference>
<dbReference type="GO" id="GO:0046872">
    <property type="term" value="F:metal ion binding"/>
    <property type="evidence" value="ECO:0007669"/>
    <property type="project" value="UniProtKB-KW"/>
</dbReference>
<dbReference type="GO" id="GO:0050401">
    <property type="term" value="F:xylonate dehydratase activity"/>
    <property type="evidence" value="ECO:0007669"/>
    <property type="project" value="UniProtKB-EC"/>
</dbReference>
<dbReference type="GO" id="GO:0019752">
    <property type="term" value="P:carboxylic acid metabolic process"/>
    <property type="evidence" value="ECO:0007669"/>
    <property type="project" value="UniProtKB-ARBA"/>
</dbReference>
<dbReference type="GO" id="GO:0042843">
    <property type="term" value="P:D-xylose catabolic process"/>
    <property type="evidence" value="ECO:0007669"/>
    <property type="project" value="UniProtKB-UniPathway"/>
</dbReference>
<dbReference type="Gene3D" id="3.50.30.80">
    <property type="entry name" value="IlvD/EDD C-terminal domain-like"/>
    <property type="match status" value="1"/>
</dbReference>
<dbReference type="InterPro" id="IPR042096">
    <property type="entry name" value="Dihydro-acid_dehy_C"/>
</dbReference>
<dbReference type="InterPro" id="IPR020558">
    <property type="entry name" value="DiOHA_6PGluconate_deHydtase_CS"/>
</dbReference>
<dbReference type="InterPro" id="IPR056740">
    <property type="entry name" value="ILV_EDD_C"/>
</dbReference>
<dbReference type="InterPro" id="IPR000581">
    <property type="entry name" value="ILV_EDD_N"/>
</dbReference>
<dbReference type="InterPro" id="IPR037237">
    <property type="entry name" value="IlvD/EDD_N"/>
</dbReference>
<dbReference type="InterPro" id="IPR052352">
    <property type="entry name" value="Sugar_Degrad_Dehydratases"/>
</dbReference>
<dbReference type="NCBIfam" id="NF004784">
    <property type="entry name" value="PRK06131.1"/>
    <property type="match status" value="1"/>
</dbReference>
<dbReference type="NCBIfam" id="NF009560">
    <property type="entry name" value="PRK13017.1"/>
    <property type="match status" value="1"/>
</dbReference>
<dbReference type="PANTHER" id="PTHR43183:SF1">
    <property type="entry name" value="HYPOTHETICAL DIHYDROXY-ACID DEHYDRATASE (EUROFUNG)-RELATED"/>
    <property type="match status" value="1"/>
</dbReference>
<dbReference type="PANTHER" id="PTHR43183">
    <property type="entry name" value="HYPOTHETICAL DIHYDROXYACID DEHYDRATASE (EUROFUNG)-RELATED"/>
    <property type="match status" value="1"/>
</dbReference>
<dbReference type="Pfam" id="PF24877">
    <property type="entry name" value="ILV_EDD_C"/>
    <property type="match status" value="1"/>
</dbReference>
<dbReference type="Pfam" id="PF00920">
    <property type="entry name" value="ILVD_EDD_N"/>
    <property type="match status" value="1"/>
</dbReference>
<dbReference type="SUPFAM" id="SSF143975">
    <property type="entry name" value="IlvD/EDD N-terminal domain-like"/>
    <property type="match status" value="1"/>
</dbReference>
<dbReference type="SUPFAM" id="SSF52016">
    <property type="entry name" value="LeuD/IlvD-like"/>
    <property type="match status" value="1"/>
</dbReference>
<dbReference type="PROSITE" id="PS00886">
    <property type="entry name" value="ILVD_EDD_1"/>
    <property type="match status" value="1"/>
</dbReference>
<proteinExistence type="evidence at protein level"/>
<reference key="1">
    <citation type="journal article" date="2001" name="Proc. Natl. Acad. Sci. U.S.A.">
        <title>Complete genome sequence of Caulobacter crescentus.</title>
        <authorList>
            <person name="Nierman W.C."/>
            <person name="Feldblyum T.V."/>
            <person name="Laub M.T."/>
            <person name="Paulsen I.T."/>
            <person name="Nelson K.E."/>
            <person name="Eisen J.A."/>
            <person name="Heidelberg J.F."/>
            <person name="Alley M.R.K."/>
            <person name="Ohta N."/>
            <person name="Maddock J.R."/>
            <person name="Potocka I."/>
            <person name="Nelson W.C."/>
            <person name="Newton A."/>
            <person name="Stephens C."/>
            <person name="Phadke N.D."/>
            <person name="Ely B."/>
            <person name="DeBoy R.T."/>
            <person name="Dodson R.J."/>
            <person name="Durkin A.S."/>
            <person name="Gwinn M.L."/>
            <person name="Haft D.H."/>
            <person name="Kolonay J.F."/>
            <person name="Smit J."/>
            <person name="Craven M.B."/>
            <person name="Khouri H.M."/>
            <person name="Shetty J."/>
            <person name="Berry K.J."/>
            <person name="Utterback T.R."/>
            <person name="Tran K."/>
            <person name="Wolf A.M."/>
            <person name="Vamathevan J.J."/>
            <person name="Ermolaeva M.D."/>
            <person name="White O."/>
            <person name="Salzberg S.L."/>
            <person name="Venter J.C."/>
            <person name="Shapiro L."/>
            <person name="Fraser C.M."/>
        </authorList>
    </citation>
    <scope>NUCLEOTIDE SEQUENCE [LARGE SCALE GENOMIC DNA]</scope>
    <source>
        <strain>ATCC 19089 / CIP 103742 / CB 15</strain>
    </source>
</reference>
<reference key="2">
    <citation type="journal article" date="2007" name="J. Bacteriol.">
        <title>Genetic analysis of a novel pathway for D-xylose metabolism in Caulobacter crescentus.</title>
        <authorList>
            <person name="Stephens C."/>
            <person name="Christen B."/>
            <person name="Fuchs T."/>
            <person name="Sundaram V."/>
            <person name="Watanabe K."/>
            <person name="Jenal U."/>
        </authorList>
    </citation>
    <scope>DISRUPTION PHENOTYPE</scope>
    <scope>PATHWAY</scope>
</reference>
<reference key="3">
    <citation type="journal article" date="2016" name="Appl. Microbiol. Biotechnol.">
        <title>Characterization and mutagenesis of two novel iron-sulphur cluster pentonate dehydratases.</title>
        <authorList>
            <person name="Andberg M."/>
            <person name="Aro-Kaerkkaeinen N."/>
            <person name="Carlson P."/>
            <person name="Oja M."/>
            <person name="Bozonnet S."/>
            <person name="Toivari M."/>
            <person name="Hakulinen N."/>
            <person name="O'Donohue M."/>
            <person name="Penttilae M."/>
            <person name="Koivula A."/>
        </authorList>
    </citation>
    <scope>FUNCTION</scope>
    <scope>CATALYTIC ACTIVITY</scope>
    <scope>COFACTOR</scope>
    <scope>IRON-SULFUR CLUSTER</scope>
    <scope>BIOPHYSICOCHEMICAL PROPERTIES</scope>
    <scope>SUBUNIT</scope>
    <scope>MUTAGENESIS OF CYS-64; CYS-132; CYS-205 AND CYS-450</scope>
</reference>
<reference key="4">
    <citation type="journal article" date="2016" name="Acta Crystallogr. F Struct. Biol. Commun.">
        <title>Crystallization and X-ray diffraction analysis of an L-arabinonate dehydratase from Rhizobium leguminosarum bv. trifolii and a D-xylonate dehydratase from Caulobacter crescentus.</title>
        <authorList>
            <person name="Rahman M.M."/>
            <person name="Andberg M."/>
            <person name="Koivula A."/>
            <person name="Rouvinen J."/>
            <person name="Hakulinen N."/>
        </authorList>
    </citation>
    <scope>CRYSTALLIZATION</scope>
</reference>
<reference evidence="9" key="5">
    <citation type="journal article" date="2018" name="Sci. Rep.">
        <title>The crystal structure of D-xylonate dehydratase reveals functional features of enzymes from the Ilv/ED dehydratase family.</title>
        <authorList>
            <person name="Rahman M.M."/>
            <person name="Andberg M."/>
            <person name="Koivula A."/>
            <person name="Rouvinen J."/>
            <person name="Hakulinen N."/>
        </authorList>
    </citation>
    <scope>X-RAY CRYSTALLOGRAPHY (2.70 ANGSTROMS) OF 6-595 IN COMPLEX WITH 2FE-2S AND MAGNESIUM</scope>
    <scope>COFACTOR</scope>
    <scope>SUBUNIT</scope>
    <source>
        <strain>ATCC 19089 / CIP 103742 / CB 15</strain>
    </source>
</reference>
<organism>
    <name type="scientific">Caulobacter vibrioides (strain ATCC 19089 / CIP 103742 / CB 15)</name>
    <name type="common">Caulobacter crescentus</name>
    <dbReference type="NCBI Taxonomy" id="190650"/>
    <lineage>
        <taxon>Bacteria</taxon>
        <taxon>Pseudomonadati</taxon>
        <taxon>Pseudomonadota</taxon>
        <taxon>Alphaproteobacteria</taxon>
        <taxon>Caulobacterales</taxon>
        <taxon>Caulobacteraceae</taxon>
        <taxon>Caulobacter</taxon>
    </lineage>
</organism>
<comment type="function">
    <text evidence="2">Catalyzes the dehydration of D-xylonate to 2-dehydro-3-deoxy-D-arabinonate during D-xylose degradation. Can also dehydrate D-gluconate, with similar catalytic efficiency. Has weak activity with D-galactonate, D-fuconate and L-arabinonate.</text>
</comment>
<comment type="catalytic activity">
    <reaction evidence="2">
        <text>D-xylonate = 2-dehydro-3-deoxy-D-arabinonate + H2O</text>
        <dbReference type="Rhea" id="RHEA:19157"/>
        <dbReference type="ChEBI" id="CHEBI:15377"/>
        <dbReference type="ChEBI" id="CHEBI:16699"/>
        <dbReference type="ChEBI" id="CHEBI:17746"/>
        <dbReference type="EC" id="4.2.1.82"/>
    </reaction>
</comment>
<comment type="catalytic activity">
    <reaction evidence="2">
        <text>D-gluconate = 2-dehydro-3-deoxy-D-gluconate + H2O</text>
        <dbReference type="Rhea" id="RHEA:21612"/>
        <dbReference type="ChEBI" id="CHEBI:15377"/>
        <dbReference type="ChEBI" id="CHEBI:18391"/>
        <dbReference type="ChEBI" id="CHEBI:57990"/>
        <dbReference type="EC" id="4.2.1.39"/>
    </reaction>
</comment>
<comment type="cofactor">
    <cofactor evidence="3 7">
        <name>[2Fe-2S] cluster</name>
        <dbReference type="ChEBI" id="CHEBI:190135"/>
    </cofactor>
</comment>
<comment type="cofactor">
    <cofactor evidence="2 3">
        <name>Mg(2+)</name>
        <dbReference type="ChEBI" id="CHEBI:18420"/>
    </cofactor>
</comment>
<comment type="biophysicochemical properties">
    <kinetics>
        <KM evidence="2">1.9 mM for D-xylonate</KM>
        <KM evidence="2">4 mM for D-gluconate</KM>
        <KM evidence="2">7.8 mM for L-arabinonate</KM>
        <KM evidence="2">5.2 mM for D-galactonate</KM>
        <KM evidence="2">5.8 mM for D-fuconate</KM>
        <text evidence="2">kcat is 1406 min(-1) with D-xylonate as substrate. kcat is 2626 min(-1) with D-gluconate as substrate. kcat is 46 min(-1) with L-arabinonate as substrate. kcat is 218 min(-1) with D-galactonate as substrate. kcat is 196 min(-1) with D-fuconate as substrate.</text>
    </kinetics>
    <phDependence>
        <text evidence="2">Optimum pH is 8.5.</text>
    </phDependence>
</comment>
<comment type="pathway">
    <text evidence="1">Carbohydrate metabolism; D-xylose degradation.</text>
</comment>
<comment type="subunit">
    <text evidence="2 3">Homotetramer.</text>
</comment>
<comment type="disruption phenotype">
    <text evidence="1">Deletion mutant cannot grow with D-xylose as the sole carbon source.</text>
</comment>
<comment type="similarity">
    <text evidence="6">Belongs to the IlvD/Edd family.</text>
</comment>
<accession>Q9A9Z2</accession>
<keyword id="KW-0001">2Fe-2S</keyword>
<keyword id="KW-0002">3D-structure</keyword>
<keyword id="KW-0119">Carbohydrate metabolism</keyword>
<keyword id="KW-0408">Iron</keyword>
<keyword id="KW-0411">Iron-sulfur</keyword>
<keyword id="KW-0456">Lyase</keyword>
<keyword id="KW-0460">Magnesium</keyword>
<keyword id="KW-0479">Metal-binding</keyword>
<keyword id="KW-1185">Reference proteome</keyword>
<keyword id="KW-0859">Xylose metabolism</keyword>
<name>XYLD_CAUVC</name>
<feature type="chain" id="PRO_0000448800" description="D-xylonate dehydratase">
    <location>
        <begin position="1"/>
        <end position="595"/>
    </location>
</feature>
<feature type="binding site" evidence="3">
    <location>
        <position position="64"/>
    </location>
    <ligand>
        <name>[2Fe-2S] cluster</name>
        <dbReference type="ChEBI" id="CHEBI:190135"/>
    </ligand>
</feature>
<feature type="binding site" evidence="3">
    <location>
        <position position="96"/>
    </location>
    <ligand>
        <name>Mg(2+)</name>
        <dbReference type="ChEBI" id="CHEBI:18420"/>
    </ligand>
</feature>
<feature type="binding site" evidence="3">
    <location>
        <position position="132"/>
    </location>
    <ligand>
        <name>[2Fe-2S] cluster</name>
        <dbReference type="ChEBI" id="CHEBI:190135"/>
    </ligand>
</feature>
<feature type="binding site" evidence="3">
    <location>
        <position position="133"/>
    </location>
    <ligand>
        <name>Mg(2+)</name>
        <dbReference type="ChEBI" id="CHEBI:18420"/>
    </ligand>
</feature>
<feature type="binding site" evidence="3">
    <location>
        <position position="205"/>
    </location>
    <ligand>
        <name>[2Fe-2S] cluster</name>
        <dbReference type="ChEBI" id="CHEBI:190135"/>
    </ligand>
</feature>
<feature type="binding site" evidence="3">
    <location>
        <position position="467"/>
    </location>
    <ligand>
        <name>Mg(2+)</name>
        <dbReference type="ChEBI" id="CHEBI:18420"/>
    </ligand>
</feature>
<feature type="mutagenesis site" description="Strong decrease in activity. Does not bind iron-sulfur cluster." evidence="2">
    <original>C</original>
    <variation>S</variation>
    <location>
        <position position="64"/>
    </location>
</feature>
<feature type="mutagenesis site" description="Almost loss of activity. Does not bind iron-sulfur cluster." evidence="2">
    <original>C</original>
    <variation>S</variation>
    <location>
        <position position="132"/>
    </location>
</feature>
<feature type="mutagenesis site" description="Strong decrease in activity. Does not bind iron-sulfur cluster." evidence="2">
    <original>C</original>
    <variation>S</variation>
    <location>
        <position position="205"/>
    </location>
</feature>
<feature type="mutagenesis site" description="Slight decrease in activity. Does not affect binding of iron-sulfur cluster." evidence="2">
    <original>C</original>
    <variation>S</variation>
    <location>
        <position position="450"/>
    </location>
</feature>
<feature type="helix" evidence="10">
    <location>
        <begin position="16"/>
        <end position="19"/>
    </location>
</feature>
<feature type="helix" evidence="10">
    <location>
        <begin position="25"/>
        <end position="34"/>
    </location>
</feature>
<feature type="turn" evidence="10">
    <location>
        <begin position="35"/>
        <end position="38"/>
    </location>
</feature>
<feature type="helix" evidence="10">
    <location>
        <begin position="42"/>
        <end position="46"/>
    </location>
</feature>
<feature type="strand" evidence="10">
    <location>
        <begin position="51"/>
        <end position="56"/>
    </location>
</feature>
<feature type="turn" evidence="10">
    <location>
        <begin position="63"/>
        <end position="67"/>
    </location>
</feature>
<feature type="helix" evidence="10">
    <location>
        <begin position="68"/>
        <end position="82"/>
    </location>
</feature>
<feature type="strand" evidence="10">
    <location>
        <begin position="85"/>
        <end position="90"/>
    </location>
</feature>
<feature type="turn" evidence="10">
    <location>
        <begin position="96"/>
        <end position="98"/>
    </location>
</feature>
<feature type="helix" evidence="10">
    <location>
        <begin position="103"/>
        <end position="105"/>
    </location>
</feature>
<feature type="helix" evidence="10">
    <location>
        <begin position="106"/>
        <end position="120"/>
    </location>
</feature>
<feature type="strand" evidence="10">
    <location>
        <begin position="125"/>
        <end position="130"/>
    </location>
</feature>
<feature type="helix" evidence="10">
    <location>
        <begin position="135"/>
        <end position="146"/>
    </location>
</feature>
<feature type="strand" evidence="10">
    <location>
        <begin position="150"/>
        <end position="154"/>
    </location>
</feature>
<feature type="helix" evidence="10">
    <location>
        <begin position="172"/>
        <end position="182"/>
    </location>
</feature>
<feature type="helix" evidence="10">
    <location>
        <begin position="188"/>
        <end position="197"/>
    </location>
</feature>
<feature type="strand" evidence="10">
    <location>
        <begin position="201"/>
        <end position="204"/>
    </location>
</feature>
<feature type="strand" evidence="10">
    <location>
        <begin position="206"/>
        <end position="209"/>
    </location>
</feature>
<feature type="helix" evidence="10">
    <location>
        <begin position="210"/>
        <end position="220"/>
    </location>
</feature>
<feature type="turn" evidence="10">
    <location>
        <begin position="226"/>
        <end position="230"/>
    </location>
</feature>
<feature type="helix" evidence="10">
    <location>
        <begin position="236"/>
        <end position="254"/>
    </location>
</feature>
<feature type="helix" evidence="10">
    <location>
        <begin position="259"/>
        <end position="262"/>
    </location>
</feature>
<feature type="helix" evidence="10">
    <location>
        <begin position="265"/>
        <end position="277"/>
    </location>
</feature>
<feature type="helix" evidence="10">
    <location>
        <begin position="284"/>
        <end position="294"/>
    </location>
</feature>
<feature type="helix" evidence="10">
    <location>
        <begin position="301"/>
        <end position="307"/>
    </location>
</feature>
<feature type="turn" evidence="10">
    <location>
        <begin position="317"/>
        <end position="319"/>
    </location>
</feature>
<feature type="strand" evidence="10">
    <location>
        <begin position="320"/>
        <end position="322"/>
    </location>
</feature>
<feature type="helix" evidence="10">
    <location>
        <begin position="324"/>
        <end position="330"/>
    </location>
</feature>
<feature type="helix" evidence="10">
    <location>
        <begin position="332"/>
        <end position="342"/>
    </location>
</feature>
<feature type="strand" evidence="10">
    <location>
        <begin position="355"/>
        <end position="357"/>
    </location>
</feature>
<feature type="helix" evidence="10">
    <location>
        <begin position="358"/>
        <end position="362"/>
    </location>
</feature>
<feature type="turn" evidence="10">
    <location>
        <begin position="370"/>
        <end position="372"/>
    </location>
</feature>
<feature type="strand" evidence="10">
    <location>
        <begin position="376"/>
        <end position="378"/>
    </location>
</feature>
<feature type="strand" evidence="10">
    <location>
        <begin position="380"/>
        <end position="383"/>
    </location>
</feature>
<feature type="strand" evidence="10">
    <location>
        <begin position="390"/>
        <end position="393"/>
    </location>
</feature>
<feature type="strand" evidence="10">
    <location>
        <begin position="395"/>
        <end position="399"/>
    </location>
</feature>
<feature type="helix" evidence="10">
    <location>
        <begin position="401"/>
        <end position="403"/>
    </location>
</feature>
<feature type="helix" evidence="10">
    <location>
        <begin position="406"/>
        <end position="412"/>
    </location>
</feature>
<feature type="strand" evidence="10">
    <location>
        <begin position="421"/>
        <end position="430"/>
    </location>
</feature>
<feature type="helix" evidence="10">
    <location>
        <begin position="431"/>
        <end position="438"/>
    </location>
</feature>
<feature type="helix" evidence="10">
    <location>
        <begin position="442"/>
        <end position="444"/>
    </location>
</feature>
<feature type="strand" evidence="10">
    <location>
        <begin position="450"/>
        <end position="456"/>
    </location>
</feature>
<feature type="turn" evidence="10">
    <location>
        <begin position="459"/>
        <end position="463"/>
    </location>
</feature>
<feature type="helix" evidence="10">
    <location>
        <begin position="475"/>
        <end position="479"/>
    </location>
</feature>
<feature type="strand" evidence="10">
    <location>
        <begin position="487"/>
        <end position="492"/>
    </location>
</feature>
<feature type="strand" evidence="10">
    <location>
        <begin position="502"/>
        <end position="507"/>
    </location>
</feature>
<feature type="helix" evidence="10">
    <location>
        <begin position="509"/>
        <end position="511"/>
    </location>
</feature>
<feature type="helix" evidence="10">
    <location>
        <begin position="514"/>
        <end position="516"/>
    </location>
</feature>
<feature type="strand" evidence="10">
    <location>
        <begin position="523"/>
        <end position="527"/>
    </location>
</feature>
<feature type="turn" evidence="10">
    <location>
        <begin position="528"/>
        <end position="531"/>
    </location>
</feature>
<feature type="strand" evidence="10">
    <location>
        <begin position="532"/>
        <end position="535"/>
    </location>
</feature>
<feature type="helix" evidence="10">
    <location>
        <begin position="539"/>
        <end position="546"/>
    </location>
</feature>
<feature type="helix" evidence="10">
    <location>
        <begin position="559"/>
        <end position="567"/>
    </location>
</feature>
<feature type="helix" evidence="10">
    <location>
        <begin position="571"/>
        <end position="573"/>
    </location>
</feature>
<feature type="helix" evidence="10">
    <location>
        <begin position="578"/>
        <end position="581"/>
    </location>
</feature>
<feature type="helix" evidence="10">
    <location>
        <begin position="586"/>
        <end position="588"/>
    </location>
</feature>
<evidence type="ECO:0000269" key="1">
    <source>
    </source>
</evidence>
<evidence type="ECO:0000269" key="2">
    <source>
    </source>
</evidence>
<evidence type="ECO:0000269" key="3">
    <source>
    </source>
</evidence>
<evidence type="ECO:0000303" key="4">
    <source>
    </source>
</evidence>
<evidence type="ECO:0000303" key="5">
    <source>
    </source>
</evidence>
<evidence type="ECO:0000305" key="6"/>
<evidence type="ECO:0000305" key="7">
    <source>
    </source>
</evidence>
<evidence type="ECO:0000312" key="8">
    <source>
        <dbReference type="EMBL" id="AAK22804.1"/>
    </source>
</evidence>
<evidence type="ECO:0007744" key="9">
    <source>
        <dbReference type="PDB" id="5OYN"/>
    </source>
</evidence>
<evidence type="ECO:0007829" key="10">
    <source>
        <dbReference type="PDB" id="5OYN"/>
    </source>
</evidence>
<sequence length="595" mass="64626">MRSALSNRTPRRFRSRDWFDNPDHIDMTALYLERFMNYGITPEELRSGKPIIGIAQTGSDISPCNRIHLDLVQRVRDGIRDAGGIPMEFPVHPIFENCRRPTAALDRNLSYLGLVETLHGYPIDAVVLTTGCDKTTPAGIMAATTVNIPAIVLSGGPMLDGWHENELVGSGTVIWRSRRKLAAGEITEEEFIDRAASSAPSAGHCNTMGTASTMNAVAEALGLSLTGCAAIPAPYRERGQMAYKTGQRIVDLAYDDVKPLDILTKQAFENAIALVAAAGGSTNAQPHIVAMARHAGVEITADDWRAAYDIPLIVNMQPAGKYLGERFHRAGGAPAVLWELLQQGRLHGDVLTVTGKTMSENLQGRETSDREVIFPYHEPLAEKAGFLVLKGNLFDFAIMKSSVIGEEFRKRYLSQPGQEGVFEARAIVFDGSDDYHKRINDPALEIDERCILVIRGAGPIGWPGSAEVVNMQPPDHLLKKGIMSLPTLGDGRQSGTADSPSILNASPESAIGGGLSWLRTGDTIRIDLNTGRCDALVDEATIAARKQDGIPAVPATMTPWQEIYRAHASQLDTGGVLEFAVKYQDLAAKLPRHNH</sequence>
<gene>
    <name evidence="4" type="primary">xylD</name>
    <name evidence="8" type="ordered locus">CC_0819</name>
</gene>
<protein>
    <recommendedName>
        <fullName evidence="5">D-xylonate dehydratase</fullName>
        <shortName evidence="5">XyDHT</shortName>
        <ecNumber evidence="2">4.2.1.82</ecNumber>
    </recommendedName>
    <alternativeName>
        <fullName evidence="6">Gluconate dehydratase</fullName>
        <ecNumber evidence="2">4.2.1.39</ecNumber>
    </alternativeName>
</protein>